<proteinExistence type="inferred from homology"/>
<reference key="1">
    <citation type="journal article" date="1995" name="Am. Fern J.">
        <title>Phylogeny and generic circumscriptions of cheilanthoid ferns (Pteridaceae: Cheilanthoideae) inferred from rbcL nucleotide sequences.</title>
        <authorList>
            <person name="Gastony G.J."/>
            <person name="Rollo D.R."/>
        </authorList>
    </citation>
    <scope>NUCLEOTIDE SEQUENCE [GENOMIC DNA]</scope>
</reference>
<feature type="chain" id="PRO_0000062560" description="Ribulose bisphosphate carboxylase large chain">
    <location>
        <begin position="1" status="less than"/>
        <end position="441" status="greater than"/>
    </location>
</feature>
<feature type="active site" description="Proton acceptor" evidence="1">
    <location>
        <position position="166"/>
    </location>
</feature>
<feature type="active site" description="Proton acceptor" evidence="1">
    <location>
        <position position="285"/>
    </location>
</feature>
<feature type="binding site" description="in homodimeric partner" evidence="1">
    <location>
        <position position="114"/>
    </location>
    <ligand>
        <name>substrate</name>
    </ligand>
</feature>
<feature type="binding site" evidence="1">
    <location>
        <position position="164"/>
    </location>
    <ligand>
        <name>substrate</name>
    </ligand>
</feature>
<feature type="binding site" evidence="1">
    <location>
        <position position="168"/>
    </location>
    <ligand>
        <name>substrate</name>
    </ligand>
</feature>
<feature type="binding site" description="via carbamate group" evidence="1">
    <location>
        <position position="192"/>
    </location>
    <ligand>
        <name>Mg(2+)</name>
        <dbReference type="ChEBI" id="CHEBI:18420"/>
    </ligand>
</feature>
<feature type="binding site" evidence="1">
    <location>
        <position position="194"/>
    </location>
    <ligand>
        <name>Mg(2+)</name>
        <dbReference type="ChEBI" id="CHEBI:18420"/>
    </ligand>
</feature>
<feature type="binding site" evidence="1">
    <location>
        <position position="195"/>
    </location>
    <ligand>
        <name>Mg(2+)</name>
        <dbReference type="ChEBI" id="CHEBI:18420"/>
    </ligand>
</feature>
<feature type="binding site" evidence="1">
    <location>
        <position position="286"/>
    </location>
    <ligand>
        <name>substrate</name>
    </ligand>
</feature>
<feature type="binding site" evidence="1">
    <location>
        <position position="318"/>
    </location>
    <ligand>
        <name>substrate</name>
    </ligand>
</feature>
<feature type="binding site" evidence="1">
    <location>
        <position position="370"/>
    </location>
    <ligand>
        <name>substrate</name>
    </ligand>
</feature>
<feature type="site" description="Transition state stabilizer" evidence="1">
    <location>
        <position position="325"/>
    </location>
</feature>
<feature type="modified residue" description="N6,N6,N6-trimethyllysine" evidence="1">
    <location>
        <position position="5"/>
    </location>
</feature>
<feature type="modified residue" description="N6-carboxylysine" evidence="1">
    <location>
        <position position="192"/>
    </location>
</feature>
<feature type="disulfide bond" description="Interchain; in linked form" evidence="1">
    <location>
        <position position="238"/>
    </location>
</feature>
<feature type="non-terminal residue">
    <location>
        <position position="1"/>
    </location>
</feature>
<feature type="non-terminal residue">
    <location>
        <position position="441"/>
    </location>
</feature>
<gene>
    <name evidence="1" type="primary">rbcL</name>
</gene>
<keyword id="KW-0113">Calvin cycle</keyword>
<keyword id="KW-0120">Carbon dioxide fixation</keyword>
<keyword id="KW-0150">Chloroplast</keyword>
<keyword id="KW-1015">Disulfide bond</keyword>
<keyword id="KW-0456">Lyase</keyword>
<keyword id="KW-0460">Magnesium</keyword>
<keyword id="KW-0479">Metal-binding</keyword>
<keyword id="KW-0488">Methylation</keyword>
<keyword id="KW-0503">Monooxygenase</keyword>
<keyword id="KW-0560">Oxidoreductase</keyword>
<keyword id="KW-0601">Photorespiration</keyword>
<keyword id="KW-0602">Photosynthesis</keyword>
<keyword id="KW-0934">Plastid</keyword>
<evidence type="ECO:0000255" key="1">
    <source>
        <dbReference type="HAMAP-Rule" id="MF_01338"/>
    </source>
</evidence>
<organism>
    <name type="scientific">Pellaea rotundifolia</name>
    <name type="common">Button fern</name>
    <name type="synonym">Pteris rotundifolia</name>
    <dbReference type="NCBI Taxonomy" id="40973"/>
    <lineage>
        <taxon>Eukaryota</taxon>
        <taxon>Viridiplantae</taxon>
        <taxon>Streptophyta</taxon>
        <taxon>Embryophyta</taxon>
        <taxon>Tracheophyta</taxon>
        <taxon>Polypodiopsida</taxon>
        <taxon>Polypodiidae</taxon>
        <taxon>Polypodiales</taxon>
        <taxon>Pteridineae</taxon>
        <taxon>Pteridaceae</taxon>
        <taxon>Cheilanthoideae</taxon>
        <taxon>Pellaea</taxon>
    </lineage>
</organism>
<geneLocation type="chloroplast"/>
<protein>
    <recommendedName>
        <fullName evidence="1">Ribulose bisphosphate carboxylase large chain</fullName>
        <shortName evidence="1">RuBisCO large subunit</shortName>
        <ecNumber evidence="1">4.1.1.39</ecNumber>
    </recommendedName>
</protein>
<sequence length="441" mass="48759">GVGFKAGVKDYRLTYYTPEYKTKDTDILAAFRMTPQPGVPAEEAGAAVAAESSTGTWTTVWTDGLTSLDRYKGRCYDIEPVAGEENQYIAYVAYPLDLFEEGSVTNMFTSIVGNVFGFKALRALXXEDLRIPPAYSKTFMGPPHGIQVERDKLNKYGRPLLGCTIKPKLGLSAKNYGRAVYECLRGGLDFTKDDENVNSQPFMRWRDRFLFVAEALFKSQAETGEVKGHYLNATAGTCEEMMKRAIFARELGAPIVMHDYLTGGFTANTSLAFYCRDNGLLLHIHRAMHAVIDRQKDHGMHFRVLAKGLRMSGGDHIHAGTVVGKLEGEREVTLGFVDLLRDDFIQKDRSRGIYFTQDWVSMPGVFPVASGGIHVWHMPALTEIFGDDSVLQFGGGTLGHPWGNAPGAVANRVALEACVQARNEGRDLAREGNEIIREASK</sequence>
<comment type="function">
    <text evidence="1">RuBisCO catalyzes two reactions: the carboxylation of D-ribulose 1,5-bisphosphate, the primary event in carbon dioxide fixation, as well as the oxidative fragmentation of the pentose substrate in the photorespiration process. Both reactions occur simultaneously and in competition at the same active site.</text>
</comment>
<comment type="catalytic activity">
    <reaction evidence="1">
        <text>2 (2R)-3-phosphoglycerate + 2 H(+) = D-ribulose 1,5-bisphosphate + CO2 + H2O</text>
        <dbReference type="Rhea" id="RHEA:23124"/>
        <dbReference type="ChEBI" id="CHEBI:15377"/>
        <dbReference type="ChEBI" id="CHEBI:15378"/>
        <dbReference type="ChEBI" id="CHEBI:16526"/>
        <dbReference type="ChEBI" id="CHEBI:57870"/>
        <dbReference type="ChEBI" id="CHEBI:58272"/>
        <dbReference type="EC" id="4.1.1.39"/>
    </reaction>
</comment>
<comment type="catalytic activity">
    <reaction evidence="1">
        <text>D-ribulose 1,5-bisphosphate + O2 = 2-phosphoglycolate + (2R)-3-phosphoglycerate + 2 H(+)</text>
        <dbReference type="Rhea" id="RHEA:36631"/>
        <dbReference type="ChEBI" id="CHEBI:15378"/>
        <dbReference type="ChEBI" id="CHEBI:15379"/>
        <dbReference type="ChEBI" id="CHEBI:57870"/>
        <dbReference type="ChEBI" id="CHEBI:58033"/>
        <dbReference type="ChEBI" id="CHEBI:58272"/>
    </reaction>
</comment>
<comment type="cofactor">
    <cofactor evidence="1">
        <name>Mg(2+)</name>
        <dbReference type="ChEBI" id="CHEBI:18420"/>
    </cofactor>
    <text evidence="1">Binds 1 Mg(2+) ion per subunit.</text>
</comment>
<comment type="subunit">
    <text evidence="1">Heterohexadecamer of 8 large chains and 8 small chains; disulfide-linked. The disulfide link is formed within the large subunit homodimers.</text>
</comment>
<comment type="subcellular location">
    <subcellularLocation>
        <location>Plastid</location>
        <location>Chloroplast</location>
    </subcellularLocation>
</comment>
<comment type="PTM">
    <text evidence="1">The disulfide bond which can form in the large chain dimeric partners within the hexadecamer appears to be associated with oxidative stress and protein turnover.</text>
</comment>
<comment type="miscellaneous">
    <text evidence="1">The basic functional RuBisCO is composed of a large chain homodimer in a 'head-to-tail' conformation. In form I RuBisCO this homodimer is arranged in a barrel-like tetramer with the small subunits forming a tetrameric 'cap' on each end of the 'barrel'.</text>
</comment>
<comment type="similarity">
    <text evidence="1">Belongs to the RuBisCO large chain family. Type I subfamily.</text>
</comment>
<name>RBL_PELRO</name>
<dbReference type="EC" id="4.1.1.39" evidence="1"/>
<dbReference type="EMBL" id="U28788">
    <property type="protein sequence ID" value="AAA69835.1"/>
    <property type="molecule type" value="Genomic_DNA"/>
</dbReference>
<dbReference type="GO" id="GO:0009507">
    <property type="term" value="C:chloroplast"/>
    <property type="evidence" value="ECO:0007669"/>
    <property type="project" value="UniProtKB-SubCell"/>
</dbReference>
<dbReference type="GO" id="GO:0000287">
    <property type="term" value="F:magnesium ion binding"/>
    <property type="evidence" value="ECO:0007669"/>
    <property type="project" value="InterPro"/>
</dbReference>
<dbReference type="GO" id="GO:0004497">
    <property type="term" value="F:monooxygenase activity"/>
    <property type="evidence" value="ECO:0007669"/>
    <property type="project" value="UniProtKB-KW"/>
</dbReference>
<dbReference type="GO" id="GO:0016984">
    <property type="term" value="F:ribulose-bisphosphate carboxylase activity"/>
    <property type="evidence" value="ECO:0007669"/>
    <property type="project" value="UniProtKB-EC"/>
</dbReference>
<dbReference type="GO" id="GO:0009853">
    <property type="term" value="P:photorespiration"/>
    <property type="evidence" value="ECO:0007669"/>
    <property type="project" value="UniProtKB-KW"/>
</dbReference>
<dbReference type="GO" id="GO:0019253">
    <property type="term" value="P:reductive pentose-phosphate cycle"/>
    <property type="evidence" value="ECO:0007669"/>
    <property type="project" value="UniProtKB-KW"/>
</dbReference>
<dbReference type="CDD" id="cd08212">
    <property type="entry name" value="RuBisCO_large_I"/>
    <property type="match status" value="1"/>
</dbReference>
<dbReference type="FunFam" id="3.20.20.110:FF:000003">
    <property type="entry name" value="Ribulose bisphosphate carboxylase large chain"/>
    <property type="match status" value="1"/>
</dbReference>
<dbReference type="FunFam" id="3.30.70.150:FF:000001">
    <property type="entry name" value="Ribulose bisphosphate carboxylase large chain"/>
    <property type="match status" value="1"/>
</dbReference>
<dbReference type="Gene3D" id="3.20.20.110">
    <property type="entry name" value="Ribulose bisphosphate carboxylase, large subunit, C-terminal domain"/>
    <property type="match status" value="1"/>
</dbReference>
<dbReference type="Gene3D" id="3.30.70.150">
    <property type="entry name" value="RuBisCO large subunit, N-terminal domain"/>
    <property type="match status" value="1"/>
</dbReference>
<dbReference type="HAMAP" id="MF_01338">
    <property type="entry name" value="RuBisCO_L_type1"/>
    <property type="match status" value="1"/>
</dbReference>
<dbReference type="InterPro" id="IPR033966">
    <property type="entry name" value="RuBisCO"/>
</dbReference>
<dbReference type="InterPro" id="IPR020878">
    <property type="entry name" value="RuBisCo_large_chain_AS"/>
</dbReference>
<dbReference type="InterPro" id="IPR000685">
    <property type="entry name" value="RuBisCO_lsu_C"/>
</dbReference>
<dbReference type="InterPro" id="IPR036376">
    <property type="entry name" value="RuBisCO_lsu_C_sf"/>
</dbReference>
<dbReference type="InterPro" id="IPR017443">
    <property type="entry name" value="RuBisCO_lsu_fd_N"/>
</dbReference>
<dbReference type="InterPro" id="IPR036422">
    <property type="entry name" value="RuBisCO_lsu_N_sf"/>
</dbReference>
<dbReference type="InterPro" id="IPR020888">
    <property type="entry name" value="RuBisCO_lsuI"/>
</dbReference>
<dbReference type="NCBIfam" id="NF003252">
    <property type="entry name" value="PRK04208.1"/>
    <property type="match status" value="1"/>
</dbReference>
<dbReference type="PANTHER" id="PTHR42704">
    <property type="entry name" value="RIBULOSE BISPHOSPHATE CARBOXYLASE"/>
    <property type="match status" value="1"/>
</dbReference>
<dbReference type="PANTHER" id="PTHR42704:SF17">
    <property type="entry name" value="RIBULOSE BISPHOSPHATE CARBOXYLASE LARGE CHAIN"/>
    <property type="match status" value="1"/>
</dbReference>
<dbReference type="Pfam" id="PF00016">
    <property type="entry name" value="RuBisCO_large"/>
    <property type="match status" value="1"/>
</dbReference>
<dbReference type="Pfam" id="PF02788">
    <property type="entry name" value="RuBisCO_large_N"/>
    <property type="match status" value="1"/>
</dbReference>
<dbReference type="SFLD" id="SFLDG01052">
    <property type="entry name" value="RuBisCO"/>
    <property type="match status" value="1"/>
</dbReference>
<dbReference type="SFLD" id="SFLDS00014">
    <property type="entry name" value="RuBisCO"/>
    <property type="match status" value="1"/>
</dbReference>
<dbReference type="SFLD" id="SFLDG00301">
    <property type="entry name" value="RuBisCO-like_proteins"/>
    <property type="match status" value="1"/>
</dbReference>
<dbReference type="SUPFAM" id="SSF51649">
    <property type="entry name" value="RuBisCo, C-terminal domain"/>
    <property type="match status" value="1"/>
</dbReference>
<dbReference type="SUPFAM" id="SSF54966">
    <property type="entry name" value="RuBisCO, large subunit, small (N-terminal) domain"/>
    <property type="match status" value="1"/>
</dbReference>
<dbReference type="PROSITE" id="PS00157">
    <property type="entry name" value="RUBISCO_LARGE"/>
    <property type="match status" value="1"/>
</dbReference>
<accession>Q32890</accession>